<organism>
    <name type="scientific">Homo sapiens</name>
    <name type="common">Human</name>
    <dbReference type="NCBI Taxonomy" id="9606"/>
    <lineage>
        <taxon>Eukaryota</taxon>
        <taxon>Metazoa</taxon>
        <taxon>Chordata</taxon>
        <taxon>Craniata</taxon>
        <taxon>Vertebrata</taxon>
        <taxon>Euteleostomi</taxon>
        <taxon>Mammalia</taxon>
        <taxon>Eutheria</taxon>
        <taxon>Euarchontoglires</taxon>
        <taxon>Primates</taxon>
        <taxon>Haplorrhini</taxon>
        <taxon>Catarrhini</taxon>
        <taxon>Hominidae</taxon>
        <taxon>Homo</taxon>
    </lineage>
</organism>
<sequence>MEDEERQKKLEAGKAKLAQFRQRKAQSDGQSPSKKQKKKRKTSSSKHDVSAHHDLNIDQSQCNEMYINSSQRVESTVIPESTIMRTLHSGEITSHEQGFSVELESEISTTADDCSSEVNGCSFVMRTGKPTNLLREEEFGVDDSYSEQGAQDSPTHLEMMESELAGKQHEIEELNRELEEMRVTYGTEGLQQLQEFEAAIKQRDGIITQLTANLQQARREKDETMREFLELTEQSQKLQIQFQQLQASETLRNSTHSSTAADLLQAKQQILTHQQQLEEQDHLLEDYQKKKEDFTMQISFLQEKIKVYEMEQDKKVENSNKEEIQEKETIIEELNTKIIEEEKKTLELKDKLTTADKLLGELQEQIVQKNQEIKNMKLELTNSKQKERQSSEEIKQLMGTVEELQKRNHKDSQFETDIVQRMEQETQRKLEQLRAELDEMYGQQIVQMKQELIRQHMAQMEEMKTRHKGEMENALRSYSNITVNEDQIKLMNVAINELNIKLQDTNSQKEKLKEELGLILEEKCALQRQLEDLVEELSFSREQIQRARQTIAEQESKLNEAHKSLSTVEDLKAEIVSASESRKELELKHEAEVTNYKIKLEMLEKEKNAVLDRMAESQEAELERLRTQLLFSHEEELSKLKEDLEIEHRINIEKLKDNLGIHYKQQIDGLQNEMSQKIETMQFEKDNLITKQNQLILEISKLKDLQQSLVNSKSEEMTLQINELQKEIEILRQEEKEKGTLEQEVQELQLKTELLEKQMKEKENDLQEKFAQLEAENSILKDEKKTLEDMLKIHTPVSQEERLIFLDSIKSKSKDSVWEKEIEILIEENEDLKQQCIQLNEEIEKQRNTFSFAEKNFEVNYQELQEEYACLLKVKDDLEDSKNKQELEYKSKLKALNEELHLQRINPTTVKMKSSVFDEDKTFVAETLEMGEVVEKDTTELMEKLEVTKREKLELSQRLSDLSEQLKQKHGEISFLNEEVKSLKQEKEQVSLRCRELEIIINHNRAENVQSCDTQVSSLLDGVVTMTSRGAEGSVSKVNKSFGEESKIMVEDKVSFENMTVGEESKQEQLILDHLPSVTKESSLRATQPSENDKLQKELNVLKSEQNDLRLQMEAQRICLSLVYSTHVDQVREYMENEKDKALCSLKEELIFAQEEKIKELQKIHQLELQTMKTQETGDEGKPLHLLIGKLQKAVSEECSYFLQTLCSVLGEYYTPALKCEVNAEDKENSGDYISENEDPELQDYRYEVQDFQENMHTLLNKVTEEYNKLLVLQTRLSKIWGQQTDGMKLEFGEENLPKEETEFLSIHSQMTNLEDIDVNHKSKLSSLQDLEKTKLEEQVQELESLISSLQQQLKETEQNYEAEIHCLQKRLQAVSESTVPPSLPVDSVVITESDAQRTMYPGSCVKKNIDGTIEFSGEFGVKEETNIVKLLEKQYQEQLEEEVAKVIVSMSIAFAQQTELSRISGGKENTASSKQAHAVCQQEQHYFNEMKLSQDQIGFQTFETVDVKFKEEFKPLSKELGEHGKEILLSNSDPHDIPESKDCVLTISEEMFSKDKTFIVRQSIHDEISVSSMDASRQLMLNEEQLEDMRQELVRQYQEHQQATELLRQAHMRQMERQREDQEQLQEEIKRLNRQLAQRSSIDNENLVSERERVLLEELEALKQLSLAGREKLCCELRNSSTQTQNGNENQGEVEEQTFKEKELDRKPEDVPPEILSNERYALQKANNRLLKILLEVVKTTAAVEETIGRHVLGILDRSSKSQSSASLIWRSEAEASVKSCVHEEHTRVTDESIPSYSGSDMPRNDINMWSKVTEEGTELSQRLVRSGFAGTEIDPENEELMLNISSRLQAAVEKLLEAISETSSQLEHAKVTQTELMRESFRQKQEATESLKCQEELRERLHEESRAREQLAVELSKAEGVIDGYADEKTLFERQIQEKTDIIDRLEQELLCASNRLQELEAEQQQIQEERELLSRQKEAMKAEAGPVEQQLLQETEKLMKEKLEVQCQAEKVRDDLQKQVKALEIDVEEQVSRFIELEQEKNTELMDLRQQNQALEKQLEKMRKFLDEQAIDREHERDVFQQEIQKLEQQLKVVPRFQPISEHQTREVEQLANHLKEKTDKCSELLLSKEQLQRDIQERNEEIEKLEFRVRELEQALLVSADTFQKVEDRKHFGAVEAKPELSLEVQLQAERDAIDRKEKEITNLEEQLEQFREELENKNEEVQQLHMQLEIQKKESTTRLQELEQENKLFKDDMEKLGLAIKESDAMSTQDQHVLFGKFAQIIQEKEVEIDQLNEQVTKLQQQLKITTDNKVIEEKNELIRDLETQIECLMSDQECVKRNREEEIEQLNEVIEKLQQELANIGQKTSMNAHSLSEEADSLKHQLDVVIAEKLALEQQVETANEEMTFMKNVLKETNFKMNQLTQELFSLKRERESVEKIQSIPENSVNVAIDHLSKDKPELEVVLTEDALKSLENQTYFKSFEENGKGSIINLETRLLQLESTVSAKDLELTQCYKQIKDMQEQGQFETEMLQKKIVNLQKIVEEKVAAALVSQIQLEAVQEYAKFCQDNQTISSEPERTNIQNLNQLREDELGSDISALTLRISELESQVVEMHTSLILEKEQVEIAEKNVLEKEKKLLELQKLLEGNEKKQREKEKKRSPQDVEVLKTTTELFHSNEESGFFNELEALRAESVATKAELASYKEKAEKLQEELLVKETNMTSLQKDLSQVRDHLAEAKEKLSILEKEDETEVQESKKACMFEPLPIKLSKSIASQTDGTLKISSSNQTPQILVKNAGIQINLQSECSSEEVTEIISQFTEKIEKMQELHAAEILDMESRHISETETLKREHYVAVQLLKEECGTLKAVIQCLRSKEGSSIPELAHSDAYQTREICSSDSGSDWGQGIYLTHSQGFDIASEGRGEESESATDSFPKKIKGLLRAVHNEGMQVLSLTESPYSDGEDHSIQQVSEPWLEERKAYINTISSLKDLITKMQLQREAEVYDSSQSHESFSDWRGELLLALQQVFLEERSVLLAAFRTELTALGTTDAVGLLNCLEQRIQEQGVEYQAAMECLQKADRRSLLSEIQALHAQMNGRKITLKREQESEKPSQELLEYNIQQKQSQMLEMQVELSSMKDRATELQEQLSSEKMVVAELKSELAQTKLELETTLKAQHKHLKELEAFRLEVKDKTDEVHLLNDTLASEQKKSRELQWALEKEKAKLGRSEERDKEELEDLKFSLESQKQRNLQLNLLLEQQKQLLNESQQKIESQRMLYDAQLSEEQGRNLELQVLLESEKVRIREMSSTLDRERELHAQLQSSDGTGQSRPPLPSEDLLKELQKQLEEKHSRIVELLNETEKYKLDSLQTRQQMEKDRQVHRKTLQTEQEANTEGQKKMHELQSKVEDLQRQLEEKRQQVYKLDLEGQRLQGIMQEFQKQELEREEKRESRRILYQNLNEPTTWSLTSDRTRNWVLQQKIEGETKESNYAKLIEMNGGGTGCNHELEMIRQKLQCVASKLQVLPQKASERLQFETADDEDFIWVQENIDEIILQLQKLTGQQGEEPSLVSPSTSCGSLTERLLRQNAELTGHISQLTEEKNDLRNMVMKLEEQIRWYRQTGAGRDNSSRFSLNGGANIEAIIASEKEVWNREKLTLQKSLKRAEAEVYKLKAELRNDSLLQTLSPDSEHVTLKRIYGKYLRAESFRKALIYQKKYLLLLLGGFQECEDATLALLARMGGQPAFTDLEVITNRPKGFTRFRSAVRVSIAISRMKFLVRRWHRVTGSVSININRDGFGLNQGAEKTDSFYHSSGGLELYGEPRHTTYRSRSDLDYIRSPLPFQNRYPGTPADFNPGSLACSQLQNYDPDRALTDYITRLEALQRRLGTIQSGSTTQFHAGMRR</sequence>
<keyword id="KW-0025">Alternative splicing</keyword>
<keyword id="KW-0175">Coiled coil</keyword>
<keyword id="KW-0963">Cytoplasm</keyword>
<keyword id="KW-0206">Cytoskeleton</keyword>
<keyword id="KW-0225">Disease variant</keyword>
<keyword id="KW-0333">Golgi apparatus</keyword>
<keyword id="KW-0454">Long QT syndrome</keyword>
<keyword id="KW-0597">Phosphoprotein</keyword>
<keyword id="KW-1267">Proteomics identification</keyword>
<keyword id="KW-1185">Reference proteome</keyword>
<reference key="1">
    <citation type="journal article" date="1998" name="J. Neurosci.">
        <title>Yotiao, a novel protein of neuromuscular junction and brain that interacts with specific splice variants of NMDA receptor subunit NR1.</title>
        <authorList>
            <person name="Lin J.W."/>
            <person name="Wyszynski M."/>
            <person name="Madhavan R."/>
            <person name="Sealock R."/>
            <person name="Kim J.U."/>
            <person name="Sheng M."/>
        </authorList>
    </citation>
    <scope>NUCLEOTIDE SEQUENCE [MRNA] (ISOFORM 4)</scope>
    <scope>FUNCTION (ISOFORM 4)</scope>
    <scope>TISSUE SPECIFICITY</scope>
    <source>
        <tissue>Brain</tissue>
    </source>
</reference>
<reference key="2">
    <citation type="journal article" date="1999" name="EMBO J.">
        <title>Cloning and characterization of a cDNA encoding an A-kinase anchoring protein located in the centrosome, AKAP450.</title>
        <authorList>
            <person name="Witczak O."/>
            <person name="Skaalhegg B.S."/>
            <person name="Keryer G."/>
            <person name="Bornens M."/>
            <person name="Tasken K."/>
            <person name="Jahnsen T."/>
            <person name="Oerstavik S."/>
        </authorList>
    </citation>
    <scope>NUCLEOTIDE SEQUENCE [MRNA] (ISOFORM 2)</scope>
    <scope>FUNCTION</scope>
    <scope>TISSUE SPECIFICITY</scope>
    <scope>VARIANT GLN-1335 INS</scope>
</reference>
<reference key="3">
    <citation type="journal article" date="1999" name="J. Biol. Chem.">
        <title>Characterization of a novel giant scaffolding protein, CG-NAP, that anchors multiple signaling enzymes to centrosome and the Golgi apparatus.</title>
        <authorList>
            <person name="Takahashi M."/>
            <person name="Shibata H."/>
            <person name="Shimakawa M."/>
            <person name="Miyamoto M."/>
            <person name="Mukai H."/>
            <person name="Ono Y."/>
        </authorList>
    </citation>
    <scope>NUCLEOTIDE SEQUENCE [MRNA] (ISOFORM 3)</scope>
    <scope>VARIANTS ILE-463 AND SER-2979</scope>
    <source>
        <tissue>Brain</tissue>
    </source>
</reference>
<reference key="4">
    <citation type="submission" date="1998-08" db="EMBL/GenBank/DDBJ databases">
        <title>Cloning of Hyperion.</title>
        <authorList>
            <person name="Kemmner W.A."/>
            <person name="Deiss S."/>
            <person name="Schwarz U."/>
        </authorList>
    </citation>
    <scope>NUCLEOTIDE SEQUENCE [GENOMIC DNA]</scope>
</reference>
<reference key="5">
    <citation type="journal article" date="2003" name="Nature">
        <title>The DNA sequence of human chromosome 7.</title>
        <authorList>
            <person name="Hillier L.W."/>
            <person name="Fulton R.S."/>
            <person name="Fulton L.A."/>
            <person name="Graves T.A."/>
            <person name="Pepin K.H."/>
            <person name="Wagner-McPherson C."/>
            <person name="Layman D."/>
            <person name="Maas J."/>
            <person name="Jaeger S."/>
            <person name="Walker R."/>
            <person name="Wylie K."/>
            <person name="Sekhon M."/>
            <person name="Becker M.C."/>
            <person name="O'Laughlin M.D."/>
            <person name="Schaller M.E."/>
            <person name="Fewell G.A."/>
            <person name="Delehaunty K.D."/>
            <person name="Miner T.L."/>
            <person name="Nash W.E."/>
            <person name="Cordes M."/>
            <person name="Du H."/>
            <person name="Sun H."/>
            <person name="Edwards J."/>
            <person name="Bradshaw-Cordum H."/>
            <person name="Ali J."/>
            <person name="Andrews S."/>
            <person name="Isak A."/>
            <person name="Vanbrunt A."/>
            <person name="Nguyen C."/>
            <person name="Du F."/>
            <person name="Lamar B."/>
            <person name="Courtney L."/>
            <person name="Kalicki J."/>
            <person name="Ozersky P."/>
            <person name="Bielicki L."/>
            <person name="Scott K."/>
            <person name="Holmes A."/>
            <person name="Harkins R."/>
            <person name="Harris A."/>
            <person name="Strong C.M."/>
            <person name="Hou S."/>
            <person name="Tomlinson C."/>
            <person name="Dauphin-Kohlberg S."/>
            <person name="Kozlowicz-Reilly A."/>
            <person name="Leonard S."/>
            <person name="Rohlfing T."/>
            <person name="Rock S.M."/>
            <person name="Tin-Wollam A.-M."/>
            <person name="Abbott A."/>
            <person name="Minx P."/>
            <person name="Maupin R."/>
            <person name="Strowmatt C."/>
            <person name="Latreille P."/>
            <person name="Miller N."/>
            <person name="Johnson D."/>
            <person name="Murray J."/>
            <person name="Woessner J.P."/>
            <person name="Wendl M.C."/>
            <person name="Yang S.-P."/>
            <person name="Schultz B.R."/>
            <person name="Wallis J.W."/>
            <person name="Spieth J."/>
            <person name="Bieri T.A."/>
            <person name="Nelson J.O."/>
            <person name="Berkowicz N."/>
            <person name="Wohldmann P.E."/>
            <person name="Cook L.L."/>
            <person name="Hickenbotham M.T."/>
            <person name="Eldred J."/>
            <person name="Williams D."/>
            <person name="Bedell J.A."/>
            <person name="Mardis E.R."/>
            <person name="Clifton S.W."/>
            <person name="Chissoe S.L."/>
            <person name="Marra M.A."/>
            <person name="Raymond C."/>
            <person name="Haugen E."/>
            <person name="Gillett W."/>
            <person name="Zhou Y."/>
            <person name="James R."/>
            <person name="Phelps K."/>
            <person name="Iadanoto S."/>
            <person name="Bubb K."/>
            <person name="Simms E."/>
            <person name="Levy R."/>
            <person name="Clendenning J."/>
            <person name="Kaul R."/>
            <person name="Kent W.J."/>
            <person name="Furey T.S."/>
            <person name="Baertsch R.A."/>
            <person name="Brent M.R."/>
            <person name="Keibler E."/>
            <person name="Flicek P."/>
            <person name="Bork P."/>
            <person name="Suyama M."/>
            <person name="Bailey J.A."/>
            <person name="Portnoy M.E."/>
            <person name="Torrents D."/>
            <person name="Chinwalla A.T."/>
            <person name="Gish W.R."/>
            <person name="Eddy S.R."/>
            <person name="McPherson J.D."/>
            <person name="Olson M.V."/>
            <person name="Eichler E.E."/>
            <person name="Green E.D."/>
            <person name="Waterston R.H."/>
            <person name="Wilson R.K."/>
        </authorList>
    </citation>
    <scope>NUCLEOTIDE SEQUENCE [LARGE SCALE GENOMIC DNA]</scope>
</reference>
<reference key="6">
    <citation type="journal article" date="2003" name="Science">
        <title>Human chromosome 7: DNA sequence and biology.</title>
        <authorList>
            <person name="Scherer S.W."/>
            <person name="Cheung J."/>
            <person name="MacDonald J.R."/>
            <person name="Osborne L.R."/>
            <person name="Nakabayashi K."/>
            <person name="Herbrick J.-A."/>
            <person name="Carson A.R."/>
            <person name="Parker-Katiraee L."/>
            <person name="Skaug J."/>
            <person name="Khaja R."/>
            <person name="Zhang J."/>
            <person name="Hudek A.K."/>
            <person name="Li M."/>
            <person name="Haddad M."/>
            <person name="Duggan G.E."/>
            <person name="Fernandez B.A."/>
            <person name="Kanematsu E."/>
            <person name="Gentles S."/>
            <person name="Christopoulos C.C."/>
            <person name="Choufani S."/>
            <person name="Kwasnicka D."/>
            <person name="Zheng X.H."/>
            <person name="Lai Z."/>
            <person name="Nusskern D.R."/>
            <person name="Zhang Q."/>
            <person name="Gu Z."/>
            <person name="Lu F."/>
            <person name="Zeesman S."/>
            <person name="Nowaczyk M.J."/>
            <person name="Teshima I."/>
            <person name="Chitayat D."/>
            <person name="Shuman C."/>
            <person name="Weksberg R."/>
            <person name="Zackai E.H."/>
            <person name="Grebe T.A."/>
            <person name="Cox S.R."/>
            <person name="Kirkpatrick S.J."/>
            <person name="Rahman N."/>
            <person name="Friedman J.M."/>
            <person name="Heng H.H.Q."/>
            <person name="Pelicci P.G."/>
            <person name="Lo-Coco F."/>
            <person name="Belloni E."/>
            <person name="Shaffer L.G."/>
            <person name="Pober B."/>
            <person name="Morton C.C."/>
            <person name="Gusella J.F."/>
            <person name="Bruns G.A.P."/>
            <person name="Korf B.R."/>
            <person name="Quade B.J."/>
            <person name="Ligon A.H."/>
            <person name="Ferguson H."/>
            <person name="Higgins A.W."/>
            <person name="Leach N.T."/>
            <person name="Herrick S.R."/>
            <person name="Lemyre E."/>
            <person name="Farra C.G."/>
            <person name="Kim H.-G."/>
            <person name="Summers A.M."/>
            <person name="Gripp K.W."/>
            <person name="Roberts W."/>
            <person name="Szatmari P."/>
            <person name="Winsor E.J.T."/>
            <person name="Grzeschik K.-H."/>
            <person name="Teebi A."/>
            <person name="Minassian B.A."/>
            <person name="Kere J."/>
            <person name="Armengol L."/>
            <person name="Pujana M.A."/>
            <person name="Estivill X."/>
            <person name="Wilson M.D."/>
            <person name="Koop B.F."/>
            <person name="Tosi S."/>
            <person name="Moore G.E."/>
            <person name="Boright A.P."/>
            <person name="Zlotorynski E."/>
            <person name="Kerem B."/>
            <person name="Kroisel P.M."/>
            <person name="Petek E."/>
            <person name="Oscier D.G."/>
            <person name="Mould S.J."/>
            <person name="Doehner H."/>
            <person name="Doehner K."/>
            <person name="Rommens J.M."/>
            <person name="Vincent J.B."/>
            <person name="Venter J.C."/>
            <person name="Li P.W."/>
            <person name="Mural R.J."/>
            <person name="Adams M.D."/>
            <person name="Tsui L.-C."/>
        </authorList>
    </citation>
    <scope>NUCLEOTIDE SEQUENCE [LARGE SCALE GENOMIC DNA]</scope>
</reference>
<reference key="7">
    <citation type="journal article" date="1999" name="J. Biol. Chem.">
        <title>AKAP350, a multiply spliced protein kinase A-anchoring protein associated with centrosomes.</title>
        <authorList>
            <person name="Schmidt P.H."/>
            <person name="Dransfield D.T."/>
            <person name="Claudio J.O."/>
            <person name="Hawley R.G."/>
            <person name="Trotter K.W."/>
            <person name="Milgram S.L."/>
            <person name="Goldenring J.R."/>
        </authorList>
    </citation>
    <scope>NUCLEOTIDE SEQUENCE [MRNA] OF 311-3907 (ISOFORM 2)</scope>
    <scope>NUCLEOTIDE SEQUENCE [MRNA] OF 2145-3907 (ISOFORM 6)</scope>
    <scope>SUBCELLULAR LOCATION</scope>
    <scope>VARIANT SER-2979</scope>
    <source>
        <tissue>Gastric parietal cell</tissue>
        <tissue>Lung</tissue>
    </source>
</reference>
<reference key="8">
    <citation type="journal article" date="1998" name="DNA Res.">
        <title>Prediction of the coding sequences of unidentified human genes. XI. The complete sequences of 100 new cDNA clones from brain which code for large proteins in vitro.</title>
        <authorList>
            <person name="Nagase T."/>
            <person name="Ishikawa K."/>
            <person name="Suyama M."/>
            <person name="Kikuno R."/>
            <person name="Miyajima N."/>
            <person name="Tanaka A."/>
            <person name="Kotani H."/>
            <person name="Nomura N."/>
            <person name="Ohara O."/>
        </authorList>
    </citation>
    <scope>NUCLEOTIDE SEQUENCE [LARGE SCALE MRNA] OF 2200-3907 (ISOFORMS 2/3)</scope>
    <scope>VARIANT SER-2979</scope>
    <source>
        <tissue>Brain</tissue>
    </source>
</reference>
<reference key="9">
    <citation type="journal article" date="2002" name="J. Biol. Chem.">
        <title>AKAP350 at the Golgi apparatus. II. Association of AKAP350 with a novel chloride intracellular channel (CLIC) family member.</title>
        <authorList>
            <person name="Shanks R.A."/>
            <person name="Larocca M.C."/>
            <person name="Berryman M."/>
            <person name="Edwards J.C."/>
            <person name="Urushidani T."/>
            <person name="Navarre J."/>
            <person name="Goldenring J.R."/>
        </authorList>
    </citation>
    <scope>INTERACTION WITH CLIC1; CLIC4 AND CLIC5</scope>
</reference>
<reference key="10">
    <citation type="journal article" date="2002" name="J. Mol. Biol.">
        <title>Centrosomal anchoring of the protein kinase CK1delta mediated by attachment to the large, coiled-coil scaffolding protein CG-NAP/AKAP450.</title>
        <authorList>
            <person name="Sillibourne J.E."/>
            <person name="Milne D.M."/>
            <person name="Takahashi M."/>
            <person name="Ono Y."/>
            <person name="Meek D.W."/>
        </authorList>
    </citation>
    <scope>INTERACTION WITH CSNK1D</scope>
    <scope>SUBCELLULAR LOCATION</scope>
</reference>
<reference key="11">
    <citation type="journal article" date="2002" name="Science">
        <title>Requirement of a macromolecular signaling complex for beta adrenergic receptor modulation of the KCNQ1-KCNE1 potassium channel.</title>
        <authorList>
            <person name="Marx S.O."/>
            <person name="Kurokawa J."/>
            <person name="Reiken S."/>
            <person name="Motoike H."/>
            <person name="D'Armiento J."/>
            <person name="Marks A.R."/>
            <person name="Kass R.S."/>
        </authorList>
    </citation>
    <scope>INTERACTION WITH KCNQ1</scope>
</reference>
<reference key="12">
    <citation type="journal article" date="2003" name="Nature">
        <title>Proteomic characterization of the human centrosome by protein correlation profiling.</title>
        <authorList>
            <person name="Andersen J.S."/>
            <person name="Wilkinson C.J."/>
            <person name="Mayor T."/>
            <person name="Mortensen P."/>
            <person name="Nigg E.A."/>
            <person name="Mann M."/>
        </authorList>
    </citation>
    <scope>IDENTIFICATION BY MASS SPECTROMETRY</scope>
    <scope>SUBCELLULAR LOCATION [LARGE SCALE ANALYSIS]</scope>
    <source>
        <tissue>Lymphoblast</tissue>
    </source>
</reference>
<reference key="13">
    <citation type="journal article" date="2004" name="Mol. Biol. Cell">
        <title>AKAP350 interaction with cdc42 interacting protein 4 at the Golgi apparatus.</title>
        <authorList>
            <person name="Larocca M.C."/>
            <person name="Shanks R.A."/>
            <person name="Tian L."/>
            <person name="Nelson D.L."/>
            <person name="Stewart D.M."/>
            <person name="Goldenring J.R."/>
        </authorList>
    </citation>
    <scope>FUNCTION</scope>
    <scope>INTERACTION WITH CIP4 AND FNBP1</scope>
    <scope>SUBCELLULAR LOCATION</scope>
</reference>
<reference key="14">
    <citation type="journal article" date="2007" name="Science">
        <title>ATM and ATR substrate analysis reveals extensive protein networks responsive to DNA damage.</title>
        <authorList>
            <person name="Matsuoka S."/>
            <person name="Ballif B.A."/>
            <person name="Smogorzewska A."/>
            <person name="McDonald E.R. III"/>
            <person name="Hurov K.E."/>
            <person name="Luo J."/>
            <person name="Bakalarski C.E."/>
            <person name="Zhao Z."/>
            <person name="Solimini N."/>
            <person name="Lerenthal Y."/>
            <person name="Shiloh Y."/>
            <person name="Gygi S.P."/>
            <person name="Elledge S.J."/>
        </authorList>
    </citation>
    <scope>PHOSPHORYLATION [LARGE SCALE ANALYSIS] AT SER-3865</scope>
    <scope>IDENTIFICATION BY MASS SPECTROMETRY [LARGE SCALE ANALYSIS]</scope>
    <source>
        <tissue>Embryonic kidney</tissue>
    </source>
</reference>
<reference key="15">
    <citation type="journal article" date="2009" name="EMBO J.">
        <title>Microtubule nucleation at the cis-side of the Golgi apparatus requires AKAP450 and GM130.</title>
        <authorList>
            <person name="Rivero S."/>
            <person name="Cardenas J."/>
            <person name="Bornens M."/>
            <person name="Rios R.M."/>
        </authorList>
    </citation>
    <scope>FUNCTION</scope>
    <scope>SUBCELLULAR LOCATION</scope>
    <scope>INTERACTION WITH GOLGA2</scope>
</reference>
<reference key="16">
    <citation type="journal article" date="2009" name="Sci. Signal.">
        <title>Quantitative phosphoproteomic analysis of T cell receptor signaling reveals system-wide modulation of protein-protein interactions.</title>
        <authorList>
            <person name="Mayya V."/>
            <person name="Lundgren D.H."/>
            <person name="Hwang S.-I."/>
            <person name="Rezaul K."/>
            <person name="Wu L."/>
            <person name="Eng J.K."/>
            <person name="Rodionov V."/>
            <person name="Han D.K."/>
        </authorList>
    </citation>
    <scope>PHOSPHORYLATION [LARGE SCALE ANALYSIS] AT SER-153 AND SER-3842</scope>
    <scope>IDENTIFICATION BY MASS SPECTROMETRY [LARGE SCALE ANALYSIS]</scope>
    <source>
        <tissue>Leukemic T-cell</tissue>
    </source>
</reference>
<reference key="17">
    <citation type="journal article" date="2011" name="BMC Syst. Biol.">
        <title>Initial characterization of the human central proteome.</title>
        <authorList>
            <person name="Burkard T.R."/>
            <person name="Planyavsky M."/>
            <person name="Kaupe I."/>
            <person name="Breitwieser F.P."/>
            <person name="Buerckstuemmer T."/>
            <person name="Bennett K.L."/>
            <person name="Superti-Furga G."/>
            <person name="Colinge J."/>
        </authorList>
    </citation>
    <scope>IDENTIFICATION BY MASS SPECTROMETRY [LARGE SCALE ANALYSIS]</scope>
</reference>
<reference key="18">
    <citation type="journal article" date="2013" name="J. Proteome Res.">
        <title>Toward a comprehensive characterization of a human cancer cell phosphoproteome.</title>
        <authorList>
            <person name="Zhou H."/>
            <person name="Di Palma S."/>
            <person name="Preisinger C."/>
            <person name="Peng M."/>
            <person name="Polat A.N."/>
            <person name="Heck A.J."/>
            <person name="Mohammed S."/>
        </authorList>
    </citation>
    <scope>PHOSPHORYLATION [LARGE SCALE ANALYSIS] AT SER-1327; SER-1765; SER-3690; SER-3842 AND SER-3897</scope>
    <scope>IDENTIFICATION BY MASS SPECTROMETRY [LARGE SCALE ANALYSIS]</scope>
    <source>
        <tissue>Cervix carcinoma</tissue>
        <tissue>Erythroleukemia</tissue>
    </source>
</reference>
<reference key="19">
    <citation type="journal article" date="2014" name="J. Cell Sci.">
        <title>A newly identified myomegalin isoform functions in Golgi microtubule organization and ER-Golgi transport.</title>
        <authorList>
            <person name="Wang Z."/>
            <person name="Zhang C."/>
            <person name="Qi R.Z."/>
        </authorList>
    </citation>
    <scope>INTERACTION WITH PDE4DIP</scope>
    <scope>SUBCELLULAR LOCATION</scope>
</reference>
<reference key="20">
    <citation type="journal article" date="2014" name="J. Proteomics">
        <title>An enzyme assisted RP-RPLC approach for in-depth analysis of human liver phosphoproteome.</title>
        <authorList>
            <person name="Bian Y."/>
            <person name="Song C."/>
            <person name="Cheng K."/>
            <person name="Dong M."/>
            <person name="Wang F."/>
            <person name="Huang J."/>
            <person name="Sun D."/>
            <person name="Wang L."/>
            <person name="Ye M."/>
            <person name="Zou H."/>
        </authorList>
    </citation>
    <scope>PHOSPHORYLATION [LARGE SCALE ANALYSIS] AT SER-153</scope>
    <scope>IDENTIFICATION BY MASS SPECTROMETRY [LARGE SCALE ANALYSIS]</scope>
    <source>
        <tissue>Liver</tissue>
    </source>
</reference>
<reference key="21">
    <citation type="journal article" date="2015" name="Mol. Biol. Cell">
        <title>CENP-32 is required to maintain centrosomal dominance in bipolar spindle assembly.</title>
        <authorList>
            <person name="Ohta S."/>
            <person name="Wood L."/>
            <person name="Toramoto I."/>
            <person name="Yagyu K."/>
            <person name="Fukagawa T."/>
            <person name="Earnshaw W.C."/>
        </authorList>
    </citation>
    <scope>FUNCTION</scope>
    <scope>SUBCELLULAR LOCATION</scope>
</reference>
<reference key="22">
    <citation type="journal article" date="2016" name="Dev. Cell">
        <title>Molecular pathway of microtubule organization at the Golgi apparatus.</title>
        <authorList>
            <person name="Wu J."/>
            <person name="de Heus C."/>
            <person name="Liu Q."/>
            <person name="Bouchet B.P."/>
            <person name="Noordstra I."/>
            <person name="Jiang K."/>
            <person name="Hua S."/>
            <person name="Martin M."/>
            <person name="Yang C."/>
            <person name="Grigoriev I."/>
            <person name="Katrukha E.A."/>
            <person name="Altelaar A.F."/>
            <person name="Hoogenraad C.C."/>
            <person name="Qi R.Z."/>
            <person name="Klumperman J."/>
            <person name="Akhmanova A."/>
        </authorList>
    </citation>
    <scope>FUNCTION</scope>
    <scope>SUBCELLULAR LOCATION</scope>
    <scope>INTERACTION WITH PDE4DIP; GAMMA-TUBULIN RING COMPLEX AND CAMSAP2</scope>
</reference>
<reference key="23">
    <citation type="journal article" date="2017" name="J. Cell Biol.">
        <title>EB1 and EB3 regulate microtubule minus end organization and Golgi morphology.</title>
        <authorList>
            <person name="Yang C."/>
            <person name="Wu J."/>
            <person name="de Heus C."/>
            <person name="Grigoriev I."/>
            <person name="Liv N."/>
            <person name="Yao Y."/>
            <person name="Smal I."/>
            <person name="Meijering E."/>
            <person name="Klumperman J."/>
            <person name="Qi R.Z."/>
            <person name="Akhmanova A."/>
        </authorList>
    </citation>
    <scope>FUNCTION</scope>
    <scope>INTERACTION WITH PDE4DIP; MAPRE1 AND MAPRE3</scope>
</reference>
<reference key="24">
    <citation type="journal article" date="2017" name="J. Genet. Genomics">
        <title>CAMSAP3-dependent microtubule dynamics regulates Golgi assembly in epithelial cells.</title>
        <authorList>
            <person name="Wang J."/>
            <person name="Xu H."/>
            <person name="Jiang Y."/>
            <person name="Takahashi M."/>
            <person name="Takeichi M."/>
            <person name="Meng W."/>
        </authorList>
    </citation>
    <scope>INTERACTION WITH CAMSAP3</scope>
</reference>
<reference key="25">
    <citation type="journal article" date="2017" name="Proc. Natl. Acad. Sci. U.S.A.">
        <title>EB1-binding-myomegalin protein complex promotes centrosomal microtubules functions.</title>
        <authorList>
            <person name="Bouguenina H."/>
            <person name="Salaun D."/>
            <person name="Mangon A."/>
            <person name="Muller L."/>
            <person name="Baudelet E."/>
            <person name="Camoin L."/>
            <person name="Tachibana T."/>
            <person name="Cianferani S."/>
            <person name="Audebert S."/>
            <person name="Verdier-Pinard P."/>
            <person name="Badache A."/>
        </authorList>
    </citation>
    <scope>FUNCTION</scope>
    <scope>INTERACTION WITH CDK5RAP2; MAPRE1 AND PDE4DIP</scope>
    <scope>SUBCELLULAR LOCATION</scope>
</reference>
<reference key="26">
    <citation type="journal article" date="2006" name="Science">
        <title>The consensus coding sequences of human breast and colorectal cancers.</title>
        <authorList>
            <person name="Sjoeblom T."/>
            <person name="Jones S."/>
            <person name="Wood L.D."/>
            <person name="Parsons D.W."/>
            <person name="Lin J."/>
            <person name="Barber T.D."/>
            <person name="Mandelker D."/>
            <person name="Leary R.J."/>
            <person name="Ptak J."/>
            <person name="Silliman N."/>
            <person name="Szabo S."/>
            <person name="Buckhaults P."/>
            <person name="Farrell C."/>
            <person name="Meeh P."/>
            <person name="Markowitz S.D."/>
            <person name="Willis J."/>
            <person name="Dawson D."/>
            <person name="Willson J.K.V."/>
            <person name="Gazdar A.F."/>
            <person name="Hartigan J."/>
            <person name="Wu L."/>
            <person name="Liu C."/>
            <person name="Parmigiani G."/>
            <person name="Park B.H."/>
            <person name="Bachman K.E."/>
            <person name="Papadopoulos N."/>
            <person name="Vogelstein B."/>
            <person name="Kinzler K.W."/>
            <person name="Velculescu V.E."/>
        </authorList>
    </citation>
    <scope>VARIANTS [LARGE SCALE ANALYSIS] ILE-2409 AND GLN-3297</scope>
</reference>
<reference key="27">
    <citation type="journal article" date="2007" name="Proc. Natl. Acad. Sci. U.S.A.">
        <title>Mutation of an A-kinase-anchoring protein causes long-QT syndrome.</title>
        <authorList>
            <person name="Chen L."/>
            <person name="Marquardt M.L."/>
            <person name="Tester D.J."/>
            <person name="Sampson K.J."/>
            <person name="Ackerman M.J."/>
            <person name="Kass R.S."/>
        </authorList>
    </citation>
    <scope>VARIANT LQT11 LEU-1570</scope>
</reference>
<name>AKAP9_HUMAN</name>
<gene>
    <name type="primary">AKAP9</name>
    <name type="synonym">AKAP350</name>
    <name type="synonym">AKAP450</name>
    <name type="synonym">KIAA0803</name>
</gene>
<evidence type="ECO:0000250" key="1">
    <source>
        <dbReference type="UniProtKB" id="Q28628"/>
    </source>
</evidence>
<evidence type="ECO:0000255" key="2"/>
<evidence type="ECO:0000256" key="3">
    <source>
        <dbReference type="SAM" id="MobiDB-lite"/>
    </source>
</evidence>
<evidence type="ECO:0000269" key="4">
    <source>
    </source>
</evidence>
<evidence type="ECO:0000269" key="5">
    <source>
    </source>
</evidence>
<evidence type="ECO:0000269" key="6">
    <source>
    </source>
</evidence>
<evidence type="ECO:0000269" key="7">
    <source>
    </source>
</evidence>
<evidence type="ECO:0000269" key="8">
    <source>
    </source>
</evidence>
<evidence type="ECO:0000269" key="9">
    <source>
    </source>
</evidence>
<evidence type="ECO:0000269" key="10">
    <source>
    </source>
</evidence>
<evidence type="ECO:0000269" key="11">
    <source>
    </source>
</evidence>
<evidence type="ECO:0000269" key="12">
    <source>
    </source>
</evidence>
<evidence type="ECO:0000269" key="13">
    <source>
    </source>
</evidence>
<evidence type="ECO:0000269" key="14">
    <source>
    </source>
</evidence>
<evidence type="ECO:0000269" key="15">
    <source>
    </source>
</evidence>
<evidence type="ECO:0000269" key="16">
    <source>
    </source>
</evidence>
<evidence type="ECO:0000269" key="17">
    <source>
    </source>
</evidence>
<evidence type="ECO:0000269" key="18">
    <source>
    </source>
</evidence>
<evidence type="ECO:0000269" key="19">
    <source>
    </source>
</evidence>
<evidence type="ECO:0000269" key="20">
    <source>
    </source>
</evidence>
<evidence type="ECO:0000269" key="21">
    <source>
    </source>
</evidence>
<evidence type="ECO:0000269" key="22">
    <source>
    </source>
</evidence>
<evidence type="ECO:0000303" key="23">
    <source>
    </source>
</evidence>
<evidence type="ECO:0000303" key="24">
    <source>
    </source>
</evidence>
<evidence type="ECO:0000303" key="25">
    <source ref="4"/>
</evidence>
<evidence type="ECO:0000305" key="26"/>
<evidence type="ECO:0007744" key="27">
    <source>
    </source>
</evidence>
<evidence type="ECO:0007744" key="28">
    <source>
    </source>
</evidence>
<evidence type="ECO:0007744" key="29">
    <source>
    </source>
</evidence>
<evidence type="ECO:0007744" key="30">
    <source>
    </source>
</evidence>
<dbReference type="EMBL" id="AJ131693">
    <property type="protein sequence ID" value="CAB40713.1"/>
    <property type="molecule type" value="mRNA"/>
</dbReference>
<dbReference type="EMBL" id="AB019691">
    <property type="protein sequence ID" value="BAA78718.1"/>
    <property type="molecule type" value="mRNA"/>
</dbReference>
<dbReference type="EMBL" id="AJ010770">
    <property type="protein sequence ID" value="CAA09361.1"/>
    <property type="molecule type" value="Genomic_DNA"/>
</dbReference>
<dbReference type="EMBL" id="AF026245">
    <property type="protein sequence ID" value="AAB86384.1"/>
    <property type="status" value="ALT_FRAME"/>
    <property type="molecule type" value="mRNA"/>
</dbReference>
<dbReference type="EMBL" id="AC004013">
    <property type="protein sequence ID" value="AAB96867.2"/>
    <property type="molecule type" value="Genomic_DNA"/>
</dbReference>
<dbReference type="EMBL" id="AC000066">
    <property type="protein sequence ID" value="AAC60380.1"/>
    <property type="status" value="ALT_SEQ"/>
    <property type="molecule type" value="Genomic_DNA"/>
</dbReference>
<dbReference type="EMBL" id="AC000120">
    <property type="protein sequence ID" value="AAS07419.1"/>
    <property type="molecule type" value="Genomic_DNA"/>
</dbReference>
<dbReference type="EMBL" id="CH236949">
    <property type="protein sequence ID" value="EAL24155.1"/>
    <property type="molecule type" value="Genomic_DNA"/>
</dbReference>
<dbReference type="EMBL" id="CH236949">
    <property type="protein sequence ID" value="EAL24156.1"/>
    <property type="molecule type" value="Genomic_DNA"/>
</dbReference>
<dbReference type="EMBL" id="CH236949">
    <property type="protein sequence ID" value="EAL24157.1"/>
    <property type="molecule type" value="Genomic_DNA"/>
</dbReference>
<dbReference type="EMBL" id="AF083037">
    <property type="protein sequence ID" value="AAD22767.1"/>
    <property type="molecule type" value="mRNA"/>
</dbReference>
<dbReference type="EMBL" id="AF091711">
    <property type="protein sequence ID" value="AAD39719.1"/>
    <property type="molecule type" value="mRNA"/>
</dbReference>
<dbReference type="EMBL" id="AB018346">
    <property type="protein sequence ID" value="BAA34523.1"/>
    <property type="molecule type" value="mRNA"/>
</dbReference>
<dbReference type="CCDS" id="CCDS5622.1">
    <molecule id="Q99996-2"/>
</dbReference>
<dbReference type="CCDS" id="CCDS94141.1">
    <molecule id="Q99996-3"/>
</dbReference>
<dbReference type="PIR" id="T08880">
    <property type="entry name" value="T08880"/>
</dbReference>
<dbReference type="RefSeq" id="NP_005742.4">
    <molecule id="Q99996-2"/>
    <property type="nucleotide sequence ID" value="NM_005751.4"/>
</dbReference>
<dbReference type="RefSeq" id="NP_671714.1">
    <molecule id="Q99996-3"/>
    <property type="nucleotide sequence ID" value="NM_147185.3"/>
</dbReference>
<dbReference type="SMR" id="Q99996"/>
<dbReference type="BioGRID" id="115445">
    <property type="interactions" value="223"/>
</dbReference>
<dbReference type="CORUM" id="Q99996"/>
<dbReference type="DIP" id="DIP-29942N"/>
<dbReference type="FunCoup" id="Q99996">
    <property type="interactions" value="1499"/>
</dbReference>
<dbReference type="IntAct" id="Q99996">
    <property type="interactions" value="138"/>
</dbReference>
<dbReference type="MINT" id="Q99996"/>
<dbReference type="STRING" id="9606.ENSP00000348573"/>
<dbReference type="CarbonylDB" id="Q99996"/>
<dbReference type="GlyCosmos" id="Q99996">
    <property type="glycosylation" value="2 sites, 1 glycan"/>
</dbReference>
<dbReference type="GlyGen" id="Q99996">
    <property type="glycosylation" value="5 sites, 2 N-linked glycans (2 sites), 1 O-linked glycan (1 site)"/>
</dbReference>
<dbReference type="iPTMnet" id="Q99996"/>
<dbReference type="MetOSite" id="Q99996"/>
<dbReference type="PhosphoSitePlus" id="Q99996"/>
<dbReference type="SwissPalm" id="Q99996"/>
<dbReference type="BioMuta" id="AKAP9"/>
<dbReference type="DMDM" id="14194461"/>
<dbReference type="jPOST" id="Q99996"/>
<dbReference type="MassIVE" id="Q99996"/>
<dbReference type="PaxDb" id="9606-ENSP00000348573"/>
<dbReference type="PeptideAtlas" id="Q99996"/>
<dbReference type="ProteomicsDB" id="78566">
    <molecule id="Q99996-1"/>
</dbReference>
<dbReference type="ProteomicsDB" id="78567">
    <molecule id="Q99996-2"/>
</dbReference>
<dbReference type="ProteomicsDB" id="78568">
    <molecule id="Q99996-3"/>
</dbReference>
<dbReference type="ProteomicsDB" id="78569">
    <molecule id="Q99996-4"/>
</dbReference>
<dbReference type="ProteomicsDB" id="78570">
    <molecule id="Q99996-5"/>
</dbReference>
<dbReference type="ProteomicsDB" id="78571">
    <molecule id="Q99996-6"/>
</dbReference>
<dbReference type="Pumba" id="Q99996"/>
<dbReference type="Antibodypedia" id="1376">
    <property type="antibodies" value="186 antibodies from 29 providers"/>
</dbReference>
<dbReference type="DNASU" id="10142"/>
<dbReference type="Ensembl" id="ENST00000356239.8">
    <molecule id="Q99996-2"/>
    <property type="protein sequence ID" value="ENSP00000348573.3"/>
    <property type="gene ID" value="ENSG00000127914.19"/>
</dbReference>
<dbReference type="Ensembl" id="ENST00000680766.1">
    <molecule id="Q99996-3"/>
    <property type="protein sequence ID" value="ENSP00000505204.1"/>
    <property type="gene ID" value="ENSG00000127914.19"/>
</dbReference>
<dbReference type="GeneID" id="10142"/>
<dbReference type="KEGG" id="hsa:10142"/>
<dbReference type="MANE-Select" id="ENST00000356239.8">
    <property type="protein sequence ID" value="ENSP00000348573.3"/>
    <property type="RefSeq nucleotide sequence ID" value="NM_005751.5"/>
    <property type="RefSeq protein sequence ID" value="NP_005742.4"/>
</dbReference>
<dbReference type="UCSC" id="uc003ulg.4">
    <molecule id="Q99996-2"/>
    <property type="organism name" value="human"/>
</dbReference>
<dbReference type="AGR" id="HGNC:379"/>
<dbReference type="CTD" id="10142"/>
<dbReference type="DisGeNET" id="10142"/>
<dbReference type="GeneCards" id="AKAP9"/>
<dbReference type="HGNC" id="HGNC:379">
    <property type="gene designation" value="AKAP9"/>
</dbReference>
<dbReference type="HPA" id="ENSG00000127914">
    <property type="expression patterns" value="Low tissue specificity"/>
</dbReference>
<dbReference type="MalaCards" id="AKAP9"/>
<dbReference type="MIM" id="604001">
    <property type="type" value="gene"/>
</dbReference>
<dbReference type="MIM" id="611820">
    <property type="type" value="phenotype"/>
</dbReference>
<dbReference type="neXtProt" id="NX_Q99996"/>
<dbReference type="OpenTargets" id="ENSG00000127914"/>
<dbReference type="Orphanet" id="130">
    <property type="disease" value="Brugada syndrome"/>
</dbReference>
<dbReference type="Orphanet" id="101016">
    <property type="disease" value="Romano-Ward syndrome"/>
</dbReference>
<dbReference type="PharmGKB" id="PA24673"/>
<dbReference type="VEuPathDB" id="HostDB:ENSG00000127914"/>
<dbReference type="eggNOG" id="ENOG502QV16">
    <property type="taxonomic scope" value="Eukaryota"/>
</dbReference>
<dbReference type="GeneTree" id="ENSGT00730000110871"/>
<dbReference type="HOGENOM" id="CLU_000187_0_0_1"/>
<dbReference type="InParanoid" id="Q99996"/>
<dbReference type="OMA" id="HYVAIQL"/>
<dbReference type="OrthoDB" id="2020852at2759"/>
<dbReference type="PAN-GO" id="Q99996">
    <property type="GO annotations" value="12 GO annotations based on evolutionary models"/>
</dbReference>
<dbReference type="PhylomeDB" id="Q99996"/>
<dbReference type="TreeFam" id="TF105408"/>
<dbReference type="PathwayCommons" id="Q99996"/>
<dbReference type="Reactome" id="R-HSA-2565942">
    <property type="pathway name" value="Regulation of PLK1 Activity at G2/M Transition"/>
</dbReference>
<dbReference type="Reactome" id="R-HSA-380259">
    <property type="pathway name" value="Loss of Nlp from mitotic centrosomes"/>
</dbReference>
<dbReference type="Reactome" id="R-HSA-380270">
    <property type="pathway name" value="Recruitment of mitotic centrosome proteins and complexes"/>
</dbReference>
<dbReference type="Reactome" id="R-HSA-380284">
    <property type="pathway name" value="Loss of proteins required for interphase microtubule organization from the centrosome"/>
</dbReference>
<dbReference type="Reactome" id="R-HSA-380320">
    <property type="pathway name" value="Recruitment of NuMA to mitotic centrosomes"/>
</dbReference>
<dbReference type="Reactome" id="R-HSA-5576890">
    <property type="pathway name" value="Phase 3 - rapid repolarisation"/>
</dbReference>
<dbReference type="Reactome" id="R-HSA-5576893">
    <property type="pathway name" value="Phase 2 - plateau phase"/>
</dbReference>
<dbReference type="Reactome" id="R-HSA-5620912">
    <property type="pathway name" value="Anchoring of the basal body to the plasma membrane"/>
</dbReference>
<dbReference type="Reactome" id="R-HSA-6802952">
    <property type="pathway name" value="Signaling by BRAF and RAF1 fusions"/>
</dbReference>
<dbReference type="Reactome" id="R-HSA-8854518">
    <property type="pathway name" value="AURKA Activation by TPX2"/>
</dbReference>
<dbReference type="SignaLink" id="Q99996"/>
<dbReference type="SIGNOR" id="Q99996"/>
<dbReference type="BioGRID-ORCS" id="10142">
    <property type="hits" value="16 hits in 1174 CRISPR screens"/>
</dbReference>
<dbReference type="CD-CODE" id="232F8A39">
    <property type="entry name" value="P-body"/>
</dbReference>
<dbReference type="CD-CODE" id="8C2F96ED">
    <property type="entry name" value="Centrosome"/>
</dbReference>
<dbReference type="CD-CODE" id="DEE660B4">
    <property type="entry name" value="Stress granule"/>
</dbReference>
<dbReference type="ChiTaRS" id="AKAP9">
    <property type="organism name" value="human"/>
</dbReference>
<dbReference type="GeneWiki" id="AKAP9"/>
<dbReference type="GenomeRNAi" id="10142"/>
<dbReference type="Pharos" id="Q99996">
    <property type="development level" value="Tbio"/>
</dbReference>
<dbReference type="PRO" id="PR:Q99996"/>
<dbReference type="Proteomes" id="UP000005640">
    <property type="component" value="Chromosome 7"/>
</dbReference>
<dbReference type="RNAct" id="Q99996">
    <property type="molecule type" value="protein"/>
</dbReference>
<dbReference type="Bgee" id="ENSG00000127914">
    <property type="expression patterns" value="Expressed in jejunal mucosa and 198 other cell types or tissues"/>
</dbReference>
<dbReference type="ExpressionAtlas" id="Q99996">
    <property type="expression patterns" value="baseline and differential"/>
</dbReference>
<dbReference type="GO" id="GO:0005813">
    <property type="term" value="C:centrosome"/>
    <property type="evidence" value="ECO:0000314"/>
    <property type="project" value="HPA"/>
</dbReference>
<dbReference type="GO" id="GO:0005801">
    <property type="term" value="C:cis-Golgi network"/>
    <property type="evidence" value="ECO:0000314"/>
    <property type="project" value="SYSCILIA_CCNET"/>
</dbReference>
<dbReference type="GO" id="GO:0005856">
    <property type="term" value="C:cytoskeleton"/>
    <property type="evidence" value="ECO:0000304"/>
    <property type="project" value="ProtInc"/>
</dbReference>
<dbReference type="GO" id="GO:0005829">
    <property type="term" value="C:cytosol"/>
    <property type="evidence" value="ECO:0000304"/>
    <property type="project" value="Reactome"/>
</dbReference>
<dbReference type="GO" id="GO:0044307">
    <property type="term" value="C:dendritic branch"/>
    <property type="evidence" value="ECO:0007669"/>
    <property type="project" value="Ensembl"/>
</dbReference>
<dbReference type="GO" id="GO:0099147">
    <property type="term" value="C:extrinsic component of postsynaptic density membrane"/>
    <property type="evidence" value="ECO:0007669"/>
    <property type="project" value="Ensembl"/>
</dbReference>
<dbReference type="GO" id="GO:0098978">
    <property type="term" value="C:glutamatergic synapse"/>
    <property type="evidence" value="ECO:0000314"/>
    <property type="project" value="SynGO"/>
</dbReference>
<dbReference type="GO" id="GO:0005794">
    <property type="term" value="C:Golgi apparatus"/>
    <property type="evidence" value="ECO:0000314"/>
    <property type="project" value="HPA"/>
</dbReference>
<dbReference type="GO" id="GO:0005795">
    <property type="term" value="C:Golgi stack"/>
    <property type="evidence" value="ECO:0000314"/>
    <property type="project" value="UniProtKB"/>
</dbReference>
<dbReference type="GO" id="GO:0043231">
    <property type="term" value="C:intracellular membrane-bounded organelle"/>
    <property type="evidence" value="ECO:0000314"/>
    <property type="project" value="HPA"/>
</dbReference>
<dbReference type="GO" id="GO:0043025">
    <property type="term" value="C:neuronal cell body"/>
    <property type="evidence" value="ECO:0007669"/>
    <property type="project" value="Ensembl"/>
</dbReference>
<dbReference type="GO" id="GO:0034705">
    <property type="term" value="C:potassium channel complex"/>
    <property type="evidence" value="ECO:0000314"/>
    <property type="project" value="MGI"/>
</dbReference>
<dbReference type="GO" id="GO:0097060">
    <property type="term" value="C:synaptic membrane"/>
    <property type="evidence" value="ECO:0000318"/>
    <property type="project" value="GO_Central"/>
</dbReference>
<dbReference type="GO" id="GO:0008076">
    <property type="term" value="C:voltage-gated potassium channel complex"/>
    <property type="evidence" value="ECO:0000314"/>
    <property type="project" value="BHF-UCL"/>
</dbReference>
<dbReference type="GO" id="GO:0003677">
    <property type="term" value="F:DNA binding"/>
    <property type="evidence" value="ECO:0007669"/>
    <property type="project" value="InterPro"/>
</dbReference>
<dbReference type="GO" id="GO:0060090">
    <property type="term" value="F:molecular adaptor activity"/>
    <property type="evidence" value="ECO:0000314"/>
    <property type="project" value="UniProtKB"/>
</dbReference>
<dbReference type="GO" id="GO:0099104">
    <property type="term" value="F:potassium channel activator activity"/>
    <property type="evidence" value="ECO:0000315"/>
    <property type="project" value="BHF-UCL"/>
</dbReference>
<dbReference type="GO" id="GO:0015459">
    <property type="term" value="F:potassium channel regulator activity"/>
    <property type="evidence" value="ECO:0000315"/>
    <property type="project" value="BHF-UCL"/>
</dbReference>
<dbReference type="GO" id="GO:0034237">
    <property type="term" value="F:protein kinase A regulatory subunit binding"/>
    <property type="evidence" value="ECO:0000314"/>
    <property type="project" value="MGI"/>
</dbReference>
<dbReference type="GO" id="GO:0005102">
    <property type="term" value="F:signaling receptor binding"/>
    <property type="evidence" value="ECO:0000304"/>
    <property type="project" value="ProtInc"/>
</dbReference>
<dbReference type="GO" id="GO:0044325">
    <property type="term" value="F:transmembrane transporter binding"/>
    <property type="evidence" value="ECO:0000353"/>
    <property type="project" value="BHF-UCL"/>
</dbReference>
<dbReference type="GO" id="GO:0071320">
    <property type="term" value="P:cellular response to cAMP"/>
    <property type="evidence" value="ECO:0000315"/>
    <property type="project" value="BHF-UCL"/>
</dbReference>
<dbReference type="GO" id="GO:0007268">
    <property type="term" value="P:chemical synaptic transmission"/>
    <property type="evidence" value="ECO:0000304"/>
    <property type="project" value="ProtInc"/>
</dbReference>
<dbReference type="GO" id="GO:0051661">
    <property type="term" value="P:maintenance of centrosome location"/>
    <property type="evidence" value="ECO:0000315"/>
    <property type="project" value="UniProtKB"/>
</dbReference>
<dbReference type="GO" id="GO:0007020">
    <property type="term" value="P:microtubule nucleation"/>
    <property type="evidence" value="ECO:0000315"/>
    <property type="project" value="UniProtKB"/>
</dbReference>
<dbReference type="GO" id="GO:0031116">
    <property type="term" value="P:positive regulation of microtubule polymerization"/>
    <property type="evidence" value="ECO:0000315"/>
    <property type="project" value="UniProtKB"/>
</dbReference>
<dbReference type="GO" id="GO:0031503">
    <property type="term" value="P:protein-containing complex localization"/>
    <property type="evidence" value="ECO:0000314"/>
    <property type="project" value="MGI"/>
</dbReference>
<dbReference type="GO" id="GO:0098909">
    <property type="term" value="P:regulation of cardiac muscle cell action potential involved in regulation of contraction"/>
    <property type="evidence" value="ECO:0000315"/>
    <property type="project" value="BHF-UCL"/>
</dbReference>
<dbReference type="GO" id="GO:1903358">
    <property type="term" value="P:regulation of Golgi organization"/>
    <property type="evidence" value="ECO:0000314"/>
    <property type="project" value="UniProtKB"/>
</dbReference>
<dbReference type="GO" id="GO:0086091">
    <property type="term" value="P:regulation of heart rate by cardiac conduction"/>
    <property type="evidence" value="ECO:0000315"/>
    <property type="project" value="BHF-UCL"/>
</dbReference>
<dbReference type="GO" id="GO:0060306">
    <property type="term" value="P:regulation of membrane repolarization"/>
    <property type="evidence" value="ECO:0000315"/>
    <property type="project" value="BHF-UCL"/>
</dbReference>
<dbReference type="GO" id="GO:0060307">
    <property type="term" value="P:regulation of ventricular cardiac muscle cell membrane repolarization"/>
    <property type="evidence" value="ECO:0000315"/>
    <property type="project" value="BHF-UCL"/>
</dbReference>
<dbReference type="GO" id="GO:0051602">
    <property type="term" value="P:response to electrical stimulus"/>
    <property type="evidence" value="ECO:0007669"/>
    <property type="project" value="Ensembl"/>
</dbReference>
<dbReference type="GO" id="GO:0007165">
    <property type="term" value="P:signal transduction"/>
    <property type="evidence" value="ECO:0000304"/>
    <property type="project" value="ProtInc"/>
</dbReference>
<dbReference type="InterPro" id="IPR028745">
    <property type="entry name" value="AKAP9/Pericentrin"/>
</dbReference>
<dbReference type="InterPro" id="IPR005539">
    <property type="entry name" value="ELK_dom"/>
</dbReference>
<dbReference type="InterPro" id="IPR019528">
    <property type="entry name" value="PACT_domain"/>
</dbReference>
<dbReference type="PANTHER" id="PTHR44981:SF1">
    <property type="entry name" value="A-KINASE ANCHOR PROTEIN 9"/>
    <property type="match status" value="1"/>
</dbReference>
<dbReference type="PANTHER" id="PTHR44981">
    <property type="entry name" value="PERICENTRIN-LIKE PROTEIN, ISOFORM F"/>
    <property type="match status" value="1"/>
</dbReference>
<dbReference type="Pfam" id="PF10495">
    <property type="entry name" value="PACT_coil_coil"/>
    <property type="match status" value="1"/>
</dbReference>
<dbReference type="SMART" id="SM01188">
    <property type="entry name" value="ELK"/>
    <property type="match status" value="4"/>
</dbReference>
<comment type="function">
    <text evidence="4 10 13 15 16 18 19">Scaffolding protein that assembles several protein kinases and phosphatases on the centrosome and Golgi apparatus. Required to maintain the integrity of the Golgi apparatus (PubMed:10202149, PubMed:15047863). Required for microtubule nucleation at the cis-side of the Golgi apparatus (PubMed:15047863, PubMed:19242490). Required for association of the centrosomes with the poles of the bipolar mitotic spindle during metaphase (PubMed:25657325). In complex with PDE4DIP isoform 13/MMG8/SMYLE, recruits CAMSAP2 to the Golgi apparatus and tethers non-centrosomal minus-end microtubules to the Golgi, an important step for polarized cell movement (PubMed:27666745, PubMed:28814570). In complex with PDE4DIP isoform 13/MMG8/SMYLE, EB1/MAPRE1 and CDK5RAP2, contributes to microtubules nucleation and extension also from the centrosome to the cell periphery (PubMed:29162697).</text>
</comment>
<comment type="function">
    <molecule>Isoform 4</molecule>
    <text evidence="20">Associated with the N-methyl-D-aspartate receptor and is specifically found in the neuromuscular junction (NMJ) as well as in neuronal synapses, suggesting a role in the organization of postsynaptic specializations.</text>
</comment>
<comment type="subunit">
    <text evidence="6 7 8 10 13 14 16 17 18 19">Interacts with the regulatory region of protein kinase N (PKN), protein phosphatase 2A (PP2A), protein phosphatase 1 (PP1) and the immature non-phosphorylated form of PKC epsilon. Interacts with CIP4 and FNBP1 (PubMed:15047863). Interacts with chloride intracellular channel proteins CLIC1, CLIC4 and CLIC5 (PubMed:12163479). CSNK1D binding promotes its centrosomal subcellular location (PubMed:12270714). Interacts with GM130/GOLGA2; leading to recruitment to the Golgi apparatus (PubMed:19242490). Interacts with KCNQ1; targets protein kinase A (PKA) catalytic and regulatory subunits and protein phosphatase 1 (PP1), to the heterodimer KCNQ1-KCNE1 (PubMed:11799244). Interacts with PDE4DIP isoform 13/MMG8/SMYLE; this interaction stabilizes both proteins (PubMed:25217626, PubMed:27666745, PubMed:28814570). In complex with PDE4DIP isoform 13, recruits CAMSAP2 to the Golgi apparatus (PubMed:27666745, PubMed:28814570). Forms a pericentrosomal complex with CDK5RAP2, EB1/MAPRE1 and PDE4DIP isoform 13; within this complex, MAPRE1 binding to CDK5RAP2 may be mediated by PDE4DIP (PubMed:29162697). Interacts with MAPRE1 and MAPRE3 (PubMed:28814570). Interacts (via C-terminus) with CAMSAP2; this interaction is much stronger in the presence of PDE4DIP isoform 13/MMG8/SMYLE (PubMed:27666745). Interacts with CAMSAP3 (PubMed:28089391). Interacts (via C-terminus) with the gamma-tubulin ring complex (gamma-TuRC), composed of gamma-tubulin, TUBGCP2, TUBGCP3, TUBGCP4, TUBGCP5 and TUBGCP6 (PubMed:27666745).</text>
</comment>
<comment type="interaction">
    <interactant intactId="EBI-1048311">
        <id>Q99996</id>
    </interactant>
    <interactant intactId="EBI-1765160">
        <id>Q9NR09</id>
        <label>BIRC6</label>
    </interactant>
    <organismsDiffer>false</organismsDiffer>
    <experiments>2</experiments>
</comment>
<comment type="interaction">
    <interactant intactId="EBI-1048311">
        <id>Q99996</id>
    </interactant>
    <interactant intactId="EBI-529989">
        <id>Q9NRI5</id>
        <label>DISC1</label>
    </interactant>
    <organismsDiffer>false</organismsDiffer>
    <experiments>2</experiments>
</comment>
<comment type="interaction">
    <interactant intactId="EBI-1048311">
        <id>Q99996</id>
    </interactant>
    <interactant intactId="EBI-618309">
        <id>Q08379</id>
        <label>GOLGA2</label>
    </interactant>
    <organismsDiffer>false</organismsDiffer>
    <experiments>3</experiments>
</comment>
<comment type="interaction">
    <interactant intactId="EBI-1048311">
        <id>Q99996</id>
    </interactant>
    <interactant intactId="EBI-710124">
        <id>O60341</id>
        <label>KDM1A</label>
    </interactant>
    <organismsDiffer>false</organismsDiffer>
    <experiments>2</experiments>
</comment>
<comment type="interaction">
    <interactant intactId="EBI-1048311">
        <id>Q99996</id>
    </interactant>
    <interactant intactId="EBI-25475888">
        <id>PRO_0000449630</id>
        <label>rep</label>
        <dbReference type="UniProtKB" id="P0DTD1"/>
    </interactant>
    <organismsDiffer>true</organismsDiffer>
    <experiments>3</experiments>
</comment>
<comment type="interaction">
    <interactant intactId="EBI-9641546">
        <id>Q99996-2</id>
    </interactant>
    <interactant intactId="EBI-2548012">
        <id>Q9H2G9</id>
        <label>BLZF1</label>
    </interactant>
    <organismsDiffer>false</organismsDiffer>
    <experiments>3</experiments>
</comment>
<comment type="interaction">
    <interactant intactId="EBI-9641546">
        <id>Q99996-2</id>
    </interactant>
    <interactant intactId="EBI-946029">
        <id>Q6P1W5</id>
        <label>C1orf94</label>
    </interactant>
    <organismsDiffer>false</organismsDiffer>
    <experiments>3</experiments>
</comment>
<comment type="interaction">
    <interactant intactId="EBI-9641546">
        <id>Q99996-2</id>
    </interactant>
    <interactant intactId="EBI-486809">
        <id>P52272</id>
        <label>HNRNPM</label>
    </interactant>
    <organismsDiffer>false</organismsDiffer>
    <experiments>3</experiments>
</comment>
<comment type="interaction">
    <interactant intactId="EBI-9641546">
        <id>Q99996-2</id>
    </interactant>
    <interactant intactId="EBI-747204">
        <id>Q9UKT9</id>
        <label>IKZF3</label>
    </interactant>
    <organismsDiffer>false</organismsDiffer>
    <experiments>3</experiments>
</comment>
<comment type="interaction">
    <interactant intactId="EBI-9641546">
        <id>Q99996-2</id>
    </interactant>
    <interactant intactId="EBI-1045155">
        <id>P43360</id>
        <label>MAGEA6</label>
    </interactant>
    <organismsDiffer>false</organismsDiffer>
    <experiments>3</experiments>
</comment>
<comment type="interaction">
    <interactant intactId="EBI-9641546">
        <id>Q99996-2</id>
    </interactant>
    <interactant intactId="EBI-716006">
        <id>Q9Y5V3</id>
        <label>MAGED1</label>
    </interactant>
    <organismsDiffer>false</organismsDiffer>
    <experiments>3</experiments>
</comment>
<comment type="interaction">
    <interactant intactId="EBI-9641546">
        <id>Q99996-2</id>
    </interactant>
    <interactant intactId="EBI-3957793">
        <id>Q9GZV8</id>
        <label>PRDM14</label>
    </interactant>
    <organismsDiffer>false</organismsDiffer>
    <experiments>3</experiments>
</comment>
<comment type="interaction">
    <interactant intactId="EBI-9641546">
        <id>Q99996-2</id>
    </interactant>
    <interactant intactId="EBI-748741">
        <id>Q8N6K7</id>
        <label>SAMD3</label>
    </interactant>
    <organismsDiffer>false</organismsDiffer>
    <experiments>3</experiments>
</comment>
<comment type="interaction">
    <interactant intactId="EBI-9641546">
        <id>Q99996-2</id>
    </interactant>
    <interactant intactId="EBI-2210673">
        <id>Q16385</id>
        <label>SSX2B</label>
    </interactant>
    <organismsDiffer>false</organismsDiffer>
    <experiments>4</experiments>
</comment>
<comment type="interaction">
    <interactant intactId="EBI-9641546">
        <id>Q99996-2</id>
    </interactant>
    <interactant intactId="EBI-741515">
        <id>Q9NVV9</id>
        <label>THAP1</label>
    </interactant>
    <organismsDiffer>false</organismsDiffer>
    <experiments>3</experiments>
</comment>
<comment type="interaction">
    <interactant intactId="EBI-9641546">
        <id>Q99996-2</id>
    </interactant>
    <interactant intactId="EBI-739895">
        <id>Q8N6Y0</id>
        <label>USHBP1</label>
    </interactant>
    <organismsDiffer>false</organismsDiffer>
    <experiments>3</experiments>
</comment>
<comment type="interaction">
    <interactant intactId="EBI-9641546">
        <id>Q99996-2</id>
    </interactant>
    <interactant intactId="EBI-356164">
        <id>O60763</id>
        <label>USO1</label>
    </interactant>
    <organismsDiffer>false</organismsDiffer>
    <experiments>3</experiments>
</comment>
<comment type="interaction">
    <interactant intactId="EBI-9641546">
        <id>Q99996-2</id>
    </interactant>
    <interactant intactId="EBI-749118">
        <id>Q9BTA9</id>
        <label>WAC</label>
    </interactant>
    <organismsDiffer>false</organismsDiffer>
    <experiments>3</experiments>
</comment>
<comment type="interaction">
    <interactant intactId="EBI-11022349">
        <id>Q99996-3</id>
    </interactant>
    <interactant intactId="EBI-10988864">
        <id>P46379-2</id>
        <label>BAG6</label>
    </interactant>
    <organismsDiffer>false</organismsDiffer>
    <experiments>3</experiments>
</comment>
<comment type="interaction">
    <interactant intactId="EBI-11022349">
        <id>Q99996-3</id>
    </interactant>
    <interactant intactId="EBI-2837444">
        <id>Q8WUW1</id>
        <label>BRK1</label>
    </interactant>
    <organismsDiffer>false</organismsDiffer>
    <experiments>3</experiments>
</comment>
<comment type="interaction">
    <interactant intactId="EBI-11022349">
        <id>Q99996-3</id>
    </interactant>
    <interactant intactId="EBI-395638">
        <id>O14645</id>
        <label>DNALI1</label>
    </interactant>
    <organismsDiffer>false</organismsDiffer>
    <experiments>3</experiments>
</comment>
<comment type="interaction">
    <interactant intactId="EBI-11022349">
        <id>Q99996-3</id>
    </interactant>
    <interactant intactId="EBI-5280572">
        <id>P29692-2</id>
        <label>EEF1D</label>
    </interactant>
    <organismsDiffer>false</organismsDiffer>
    <experiments>3</experiments>
</comment>
<comment type="interaction">
    <interactant intactId="EBI-11022349">
        <id>Q99996-3</id>
    </interactant>
    <interactant intactId="EBI-348399">
        <id>P22607</id>
        <label>FGFR3</label>
    </interactant>
    <organismsDiffer>false</organismsDiffer>
    <experiments>3</experiments>
</comment>
<comment type="interaction">
    <interactant intactId="EBI-11022349">
        <id>Q99996-3</id>
    </interactant>
    <interactant intactId="EBI-351506">
        <id>P06396</id>
        <label>GSN</label>
    </interactant>
    <organismsDiffer>false</organismsDiffer>
    <experiments>3</experiments>
</comment>
<comment type="interaction">
    <interactant intactId="EBI-11022349">
        <id>Q99996-3</id>
    </interactant>
    <interactant intactId="EBI-350145">
        <id>P01112</id>
        <label>HRAS</label>
    </interactant>
    <organismsDiffer>false</organismsDiffer>
    <experiments>3</experiments>
</comment>
<comment type="interaction">
    <interactant intactId="EBI-11022349">
        <id>Q99996-3</id>
    </interactant>
    <interactant intactId="EBI-6398041">
        <id>Q9UMF0</id>
        <label>ICAM5</label>
    </interactant>
    <organismsDiffer>false</organismsDiffer>
    <experiments>3</experiments>
</comment>
<comment type="interaction">
    <interactant intactId="EBI-11022349">
        <id>Q99996-3</id>
    </interactant>
    <interactant intactId="EBI-948266">
        <id>O14901</id>
        <label>KLF11</label>
    </interactant>
    <organismsDiffer>false</organismsDiffer>
    <experiments>3</experiments>
</comment>
<comment type="interaction">
    <interactant intactId="EBI-11022349">
        <id>Q99996-3</id>
    </interactant>
    <interactant intactId="EBI-2811583">
        <id>Q9BVL2</id>
        <label>NUP58</label>
    </interactant>
    <organismsDiffer>false</organismsDiffer>
    <experiments>3</experiments>
</comment>
<comment type="interaction">
    <interactant intactId="EBI-15676518">
        <id>Q99996-4</id>
    </interactant>
    <interactant intactId="EBI-1027877">
        <id>P26769</id>
        <label>Adcy2</label>
    </interactant>
    <organismsDiffer>true</organismsDiffer>
    <experiments>3</experiments>
</comment>
<comment type="subcellular location">
    <subcellularLocation>
        <location evidence="10 13 14 16">Golgi apparatus</location>
    </subcellularLocation>
    <subcellularLocation>
        <location evidence="22">Cytoplasm</location>
    </subcellularLocation>
    <subcellularLocation>
        <location evidence="8 9 15 19 22">Cytoplasm</location>
        <location evidence="8 9 15 19 22">Cytoskeleton</location>
        <location evidence="8 9 15 19 22">Microtubule organizing center</location>
        <location evidence="8 9 15 19 22">Centrosome</location>
    </subcellularLocation>
    <text evidence="14 15 19 22">Cytoplasmic in parietal cells (PubMed:9915845). Recruited to the Golgi apparatus by GM130/GOLGA2 (PubMed:25657325). Localization at the centrosome versus Golgi apparatus may be cell line-dependent. In SKBr3 and HEK293F cells, exclusively located at the centrosome (PubMed:29162697). In HeLa, MDA-MB231 and RPE-1 cells, detected at the Golgi apparatus (PubMed:25217626, PubMed:29162697). In SK-BR-3 cells, recruited to the centrosome in the presence of CDK5RAP2 (PubMed:29162697).</text>
</comment>
<comment type="alternative products">
    <event type="alternative splicing"/>
    <isoform>
        <id>Q99996-2</id>
        <name>2</name>
        <sequence type="displayed"/>
    </isoform>
    <isoform>
        <id>Q99996-1</id>
        <name>1</name>
        <sequence type="described" ref="VSP_059522 VSP_059526"/>
    </isoform>
    <isoform>
        <id>Q99996-3</id>
        <name>3</name>
        <name>CG-NAP</name>
        <sequence type="described" ref="VSP_059525"/>
    </isoform>
    <isoform>
        <id>Q99996-4</id>
        <name>4</name>
        <name>Yotiao</name>
        <sequence type="described" ref="VSP_059522 VSP_059523 VSP_059524"/>
    </isoform>
    <isoform>
        <id>Q99996-5</id>
        <name>5</name>
        <sequence type="described" ref="VSP_059522 VSP_059527"/>
    </isoform>
    <isoform>
        <id>Q99996-6</id>
        <name>6</name>
        <name>AKAP350</name>
        <sequence type="described" ref="VSP_059522 VSP_059525 VSP_059528"/>
    </isoform>
</comment>
<comment type="tissue specificity">
    <text evidence="4 20">Widely expressed (PubMed:10202149). Isoform 4: Highly expressed in skeletal muscle and in pancreas (PubMed:9482789).</text>
</comment>
<comment type="domain">
    <text evidence="1">RII-binding site, predicted to form an amphipathic helix, could participate in protein-protein interactions with a complementary surface on the R-subunit dimer.</text>
</comment>
<comment type="disease" evidence="12">
    <disease id="DI-00688">
        <name>Long QT syndrome 11</name>
        <acronym>LQT11</acronym>
        <description>A heart disorder characterized by a prolonged QT interval on the ECG and polymorphic ventricular arrhythmias. They cause syncope and sudden death in response to exercise or emotional stress, and can present with a sentinel event of sudden cardiac death in infancy.</description>
        <dbReference type="MIM" id="611820"/>
    </disease>
    <text>The disease is caused by variants affecting the gene represented in this entry.</text>
</comment>
<comment type="sequence caution" evidence="26">
    <conflict type="frameshift">
        <sequence resource="EMBL-CDS" id="AAB86384"/>
    </conflict>
</comment>
<comment type="sequence caution" evidence="26">
    <conflict type="erroneous gene model prediction">
        <sequence resource="EMBL-CDS" id="AAC60380"/>
    </conflict>
</comment>
<comment type="online information" name="Atlas of Genetics and Cytogenetics in Oncology and Haematology">
    <link uri="https://atlasgeneticsoncology.org/gene/42999/AKAP9"/>
</comment>
<feature type="chain" id="PRO_0000064534" description="A-kinase anchor protein 9">
    <location>
        <begin position="1"/>
        <end position="3907"/>
    </location>
</feature>
<feature type="region of interest" description="Disordered" evidence="3">
    <location>
        <begin position="1"/>
        <end position="57"/>
    </location>
</feature>
<feature type="region of interest" description="Disordered" evidence="3">
    <location>
        <begin position="1682"/>
        <end position="1713"/>
    </location>
</feature>
<feature type="region of interest" description="PKA-RII subunit binding domain">
    <location>
        <begin position="2542"/>
        <end position="2555"/>
    </location>
</feature>
<feature type="region of interest" description="Disordered" evidence="3">
    <location>
        <begin position="3377"/>
        <end position="3405"/>
    </location>
</feature>
<feature type="coiled-coil region" evidence="2">
    <location>
        <begin position="152"/>
        <end position="902"/>
    </location>
</feature>
<feature type="coiled-coil region" evidence="2">
    <location>
        <begin position="932"/>
        <end position="1010"/>
    </location>
</feature>
<feature type="coiled-coil region" evidence="2">
    <location>
        <begin position="1088"/>
        <end position="1173"/>
    </location>
</feature>
<feature type="coiled-coil region" evidence="2">
    <location>
        <begin position="1241"/>
        <end position="1268"/>
    </location>
</feature>
<feature type="coiled-coil region" evidence="2">
    <location>
        <begin position="1324"/>
        <end position="1380"/>
    </location>
</feature>
<feature type="coiled-coil region" evidence="2">
    <location>
        <begin position="1422"/>
        <end position="1447"/>
    </location>
</feature>
<feature type="coiled-coil region" evidence="2">
    <location>
        <begin position="1573"/>
        <end position="1647"/>
    </location>
</feature>
<feature type="coiled-coil region" evidence="2">
    <location>
        <begin position="1845"/>
        <end position="2443"/>
    </location>
</feature>
<feature type="coiled-coil region" evidence="2">
    <location>
        <begin position="2532"/>
        <end position="2549"/>
    </location>
</feature>
<feature type="coiled-coil region" evidence="2">
    <location>
        <begin position="2591"/>
        <end position="2764"/>
    </location>
</feature>
<feature type="coiled-coil region" evidence="2">
    <location>
        <begin position="3061"/>
        <end position="3088"/>
    </location>
</feature>
<feature type="coiled-coil region" evidence="2">
    <location>
        <begin position="3120"/>
        <end position="3466"/>
    </location>
</feature>
<feature type="coiled-coil region" evidence="2">
    <location>
        <begin position="3583"/>
        <end position="3685"/>
    </location>
</feature>
<feature type="compositionally biased region" description="Basic and acidic residues" evidence="3">
    <location>
        <begin position="1"/>
        <end position="14"/>
    </location>
</feature>
<feature type="compositionally biased region" description="Basic residues" evidence="3">
    <location>
        <begin position="34"/>
        <end position="44"/>
    </location>
</feature>
<feature type="compositionally biased region" description="Basic and acidic residues" evidence="3">
    <location>
        <begin position="45"/>
        <end position="56"/>
    </location>
</feature>
<feature type="compositionally biased region" description="Low complexity" evidence="3">
    <location>
        <begin position="1682"/>
        <end position="1692"/>
    </location>
</feature>
<feature type="compositionally biased region" description="Basic and acidic residues" evidence="3">
    <location>
        <begin position="1698"/>
        <end position="1711"/>
    </location>
</feature>
<feature type="modified residue" description="Phosphoserine" evidence="28 30">
    <location>
        <position position="153"/>
    </location>
</feature>
<feature type="modified residue" description="Phosphoserine" evidence="29">
    <location>
        <position position="1327"/>
    </location>
</feature>
<feature type="modified residue" description="Phosphoserine" evidence="29">
    <location>
        <position position="1765"/>
    </location>
</feature>
<feature type="modified residue" description="Phosphoserine" evidence="29">
    <location>
        <position position="3690"/>
    </location>
</feature>
<feature type="modified residue" description="Phosphoserine" evidence="28 29">
    <location>
        <position position="3842"/>
    </location>
</feature>
<feature type="modified residue" description="Phosphoserine" evidence="27">
    <location>
        <position position="3865"/>
    </location>
</feature>
<feature type="modified residue" description="Phosphoserine" evidence="29">
    <location>
        <position position="3897"/>
    </location>
</feature>
<feature type="splice variant" id="VSP_059522" description="In isoform 1, isoform 4, isoform 5 and isoform 6.">
    <original>K</original>
    <variation>KIEELSLAFLVRQ</variation>
    <location>
        <position position="16"/>
    </location>
</feature>
<feature type="splice variant" id="VSP_059523" description="In isoform 4.">
    <location>
        <begin position="1625"/>
        <end position="3900"/>
    </location>
</feature>
<feature type="splice variant" id="VSP_059525" description="In isoform 3 and isoform 6.">
    <original>SADTFQKVE</original>
    <variation>E</variation>
    <location>
        <begin position="2163"/>
        <end position="2171"/>
    </location>
</feature>
<feature type="splice variant" id="VSP_059526" description="In isoform 1.">
    <original>GSSIPELAHSDAYQTREICSS</original>
    <variation>VFGFYNMCFSTLC</variation>
    <location>
        <begin position="2883"/>
        <end position="2903"/>
    </location>
</feature>
<feature type="splice variant" id="VSP_059527" description="In isoform 5.">
    <location>
        <begin position="2884"/>
        <end position="2945"/>
    </location>
</feature>
<feature type="splice variant" id="VSP_059528" description="In isoform 6.">
    <original>STTQFHAGMRR</original>
    <variation>ALSLTTSWQHHSARPTAPLFFEILSHSLG</variation>
    <location>
        <begin position="3897"/>
        <end position="3907"/>
    </location>
</feature>
<feature type="splice variant" id="VSP_059524" description="In isoform 4.">
    <original>FHAGMRR</original>
    <variation>LAQVRVL</variation>
    <location>
        <begin position="3901"/>
        <end position="3907"/>
    </location>
</feature>
<feature type="sequence variant" id="VAR_024249" description="In dbSNP:rs6964587." evidence="5">
    <original>M</original>
    <variation>I</variation>
    <location>
        <position position="463"/>
    </location>
</feature>
<feature type="sequence variant" id="VAR_010926" evidence="4">
    <original>K</original>
    <variation>KQ</variation>
    <location>
        <position position="1335"/>
    </location>
</feature>
<feature type="sequence variant" id="VAR_043489" description="In LQT11; dbSNP:rs121908566." evidence="12">
    <original>S</original>
    <variation>L</variation>
    <location>
        <position position="1570"/>
    </location>
</feature>
<feature type="sequence variant" id="VAR_035785" description="In a colorectal cancer sample; somatic mutation." evidence="11">
    <original>M</original>
    <variation>I</variation>
    <location>
        <position position="2409"/>
    </location>
</feature>
<feature type="sequence variant" id="VAR_043490" description="In dbSNP:rs35759833.">
    <original>K</original>
    <variation>R</variation>
    <location>
        <position position="2484"/>
    </location>
</feature>
<feature type="sequence variant" id="VAR_030162" description="In dbSNP:rs6960867.">
    <original>N</original>
    <variation>S</variation>
    <location>
        <position position="2792"/>
    </location>
</feature>
<feature type="sequence variant" id="VAR_030163" description="In dbSNP:rs1063242." evidence="5 21 22">
    <original>P</original>
    <variation>S</variation>
    <location>
        <position position="2979"/>
    </location>
</feature>
<feature type="sequence variant" id="VAR_035786" description="In a breast cancer sample; somatic mutation; dbSNP:rs756245027." evidence="11">
    <original>E</original>
    <variation>Q</variation>
    <location>
        <position position="3297"/>
    </location>
</feature>
<feature type="sequence variant" id="VAR_043491" description="In dbSNP:rs34956633.">
    <original>Q</original>
    <variation>R</variation>
    <location>
        <position position="3444"/>
    </location>
</feature>
<feature type="sequence variant" id="VAR_043492" description="In dbSNP:rs34327395.">
    <original>M</original>
    <variation>V</variation>
    <location>
        <position position="3614"/>
    </location>
</feature>
<feature type="sequence conflict" description="In Ref. 3; BAA78718." evidence="26" ref="3">
    <original>E</original>
    <variation>Q</variation>
    <location>
        <position position="64"/>
    </location>
</feature>
<feature type="sequence conflict" description="In Ref. 3; BAA78718." evidence="26" ref="3">
    <original>E</original>
    <variation>G</variation>
    <location>
        <position position="542"/>
    </location>
</feature>
<feature type="sequence conflict" description="In Ref. 3; BAA78718." evidence="26" ref="3">
    <original>R</original>
    <variation>S</variation>
    <location>
        <position position="626"/>
    </location>
</feature>
<feature type="sequence conflict" description="In Ref. 3; BAA78718." evidence="26" ref="3">
    <original>N</original>
    <variation>S</variation>
    <location>
        <position position="651"/>
    </location>
</feature>
<feature type="sequence conflict" description="In Ref. 3; BAA78718." evidence="26" ref="3">
    <original>H</original>
    <variation>N</variation>
    <location>
        <position position="901"/>
    </location>
</feature>
<feature type="sequence conflict" description="In Ref. 3; BAA78718." evidence="26" ref="3">
    <original>K</original>
    <variation>N</variation>
    <location>
        <position position="944"/>
    </location>
</feature>
<feature type="sequence conflict" description="In Ref. 1; AAB86384 and 2; CAB40713." evidence="26" ref="1 2">
    <original>QKH</original>
    <variation>PKP</variation>
    <location>
        <begin position="968"/>
        <end position="970"/>
    </location>
</feature>
<feature type="sequence conflict" description="In Ref. 1; AAB86384 and 2; CAB40713." evidence="26" ref="1 2">
    <original>Q</original>
    <variation>P</variation>
    <location>
        <position position="985"/>
    </location>
</feature>
<feature type="sequence conflict" description="In Ref. 1; AAB86384 and 2; CAB40713." evidence="26" ref="1 2">
    <original>Q</original>
    <variation>P</variation>
    <location>
        <position position="989"/>
    </location>
</feature>
<feature type="sequence conflict" description="In Ref. 3; BAA78718." evidence="26" ref="3">
    <original>N</original>
    <variation>D</variation>
    <location>
        <position position="1008"/>
    </location>
</feature>
<feature type="sequence conflict" description="In Ref. 3; BAA78718." evidence="26" ref="3">
    <original>V</original>
    <variation>E</variation>
    <location>
        <position position="1016"/>
    </location>
</feature>
<feature type="sequence conflict" description="In Ref. 1; AAB86384 and 2; CAB40713." evidence="26" ref="1 2">
    <original>R</original>
    <variation>P</variation>
    <location>
        <position position="1614"/>
    </location>
</feature>
<feature type="sequence conflict" description="In Ref. 3; BAA78718." evidence="26" ref="3">
    <original>N</original>
    <variation>T</variation>
    <location>
        <position position="1691"/>
    </location>
</feature>
<feature type="sequence conflict" description="In Ref. 3; BAA78718." evidence="26" ref="3">
    <original>V</original>
    <variation>G</variation>
    <location>
        <position position="1695"/>
    </location>
</feature>
<feature type="sequence conflict" description="In Ref. 7; AAD22767." evidence="26" ref="7">
    <location>
        <begin position="1790"/>
        <end position="1791"/>
    </location>
</feature>
<feature type="sequence conflict" description="In Ref. 3; BAA78718." evidence="26" ref="3">
    <original>A</original>
    <variation>P</variation>
    <location>
        <position position="1831"/>
    </location>
</feature>
<feature type="sequence conflict" description="In Ref. 3; BAA78718." evidence="26" ref="3">
    <original>I</original>
    <variation>V</variation>
    <location>
        <position position="1944"/>
    </location>
</feature>
<feature type="sequence conflict" description="In Ref. 7; AAD22767." evidence="26" ref="7">
    <original>V</original>
    <variation>D</variation>
    <location>
        <position position="2015"/>
    </location>
</feature>
<feature type="sequence conflict" description="In Ref. 7; AAD39719." evidence="26" ref="7">
    <original>EI</original>
    <variation>HE</variation>
    <location>
        <begin position="2145"/>
        <end position="2146"/>
    </location>
</feature>
<feature type="sequence conflict" description="In Ref. 3; BAA78718." evidence="26" ref="3">
    <original>E</original>
    <variation>V</variation>
    <location>
        <position position="2157"/>
    </location>
</feature>
<feature type="sequence conflict" description="In Ref. 7; AAD39719." evidence="26" ref="7">
    <original>E</original>
    <variation>Q</variation>
    <location>
        <position position="2171"/>
    </location>
</feature>
<feature type="sequence conflict" description="In Ref. 3; BAA78718." evidence="26" ref="3">
    <original>L</original>
    <variation>R</variation>
    <location>
        <position position="2502"/>
    </location>
</feature>
<feature type="sequence conflict" description="In Ref. 8; BAA34523." evidence="26" ref="8">
    <original>I</original>
    <variation>N</variation>
    <location>
        <position position="2839"/>
    </location>
</feature>
<feature type="sequence conflict" description="In Ref. 3; BAA78718." evidence="26" ref="3">
    <original>E</original>
    <variation>D</variation>
    <location>
        <position position="2953"/>
    </location>
</feature>
<feature type="sequence conflict" description="In Ref. 3; BAA78718." evidence="26" ref="3">
    <original>Q</original>
    <variation>H</variation>
    <location>
        <position position="3083"/>
    </location>
</feature>
<feature type="sequence conflict" description="In Ref. 3; BAA78718." evidence="26" ref="3">
    <original>Q</original>
    <variation>H</variation>
    <location>
        <position position="3214"/>
    </location>
</feature>
<feature type="sequence conflict" description="In Ref. 3; BAA78718." evidence="26" ref="3">
    <original>ESE</original>
    <variation>QSQ</variation>
    <location>
        <begin position="3303"/>
        <end position="3305"/>
    </location>
</feature>
<feature type="sequence conflict" description="In Ref. 3; BAA78718." evidence="26" ref="3">
    <original>P</original>
    <variation>A</variation>
    <location>
        <position position="3747"/>
    </location>
</feature>
<feature type="sequence conflict" description="In Ref. 3; BAA78718." evidence="26" ref="3">
    <original>T</original>
    <variation>S</variation>
    <location>
        <position position="3829"/>
    </location>
</feature>
<feature type="sequence conflict" description="In Ref. 7; AAD39719." evidence="26" ref="7">
    <original>E</original>
    <variation>Q</variation>
    <location sequence="Q99996-6">
        <position position="2175"/>
    </location>
</feature>
<accession>Q99996</accession>
<accession>A4D1F0</accession>
<accession>A4D1F2</accession>
<accession>A4D1F4</accession>
<accession>O14869</accession>
<accession>O43355</accession>
<accession>O94895</accession>
<accession>Q75N20</accession>
<accession>Q9UQH3</accession>
<accession>Q9UQQ4</accession>
<accession>Q9Y6B8</accession>
<accession>Q9Y6Y2</accession>
<proteinExistence type="evidence at protein level"/>
<protein>
    <recommendedName>
        <fullName>A-kinase anchor protein 9</fullName>
        <shortName>AKAP-9</shortName>
    </recommendedName>
    <alternativeName>
        <fullName>A-kinase anchor protein 350 kDa</fullName>
        <shortName>AKAP 350</shortName>
        <shortName>hgAKAP 350</shortName>
    </alternativeName>
    <alternativeName>
        <fullName>A-kinase anchor protein 450 kDa</fullName>
        <shortName>AKAP 450</shortName>
    </alternativeName>
    <alternativeName>
        <fullName>AKAP 120-like protein</fullName>
    </alternativeName>
    <alternativeName>
        <fullName evidence="23">Centrosome- and Golgi-localized PKN-associated protein</fullName>
        <shortName evidence="23">CG-NAP</shortName>
    </alternativeName>
    <alternativeName>
        <fullName evidence="25">Protein hyperion</fullName>
    </alternativeName>
    <alternativeName>
        <fullName>Protein kinase A-anchoring protein 9</fullName>
        <shortName>PRKA9</shortName>
    </alternativeName>
    <alternativeName>
        <fullName evidence="24">Protein yotiao</fullName>
    </alternativeName>
</protein>